<name>RF1_EHRCJ</name>
<dbReference type="EMBL" id="CP000107">
    <property type="protein sequence ID" value="AAZ68482.1"/>
    <property type="molecule type" value="Genomic_DNA"/>
</dbReference>
<dbReference type="RefSeq" id="WP_011304560.1">
    <property type="nucleotide sequence ID" value="NC_007354.1"/>
</dbReference>
<dbReference type="SMR" id="Q3YS23"/>
<dbReference type="FunCoup" id="Q3YS23">
    <property type="interactions" value="281"/>
</dbReference>
<dbReference type="STRING" id="269484.Ecaj_0442"/>
<dbReference type="KEGG" id="ecn:Ecaj_0442"/>
<dbReference type="eggNOG" id="COG0216">
    <property type="taxonomic scope" value="Bacteria"/>
</dbReference>
<dbReference type="HOGENOM" id="CLU_036856_0_1_5"/>
<dbReference type="InParanoid" id="Q3YS23"/>
<dbReference type="Proteomes" id="UP000000435">
    <property type="component" value="Chromosome"/>
</dbReference>
<dbReference type="GO" id="GO:0005737">
    <property type="term" value="C:cytoplasm"/>
    <property type="evidence" value="ECO:0007669"/>
    <property type="project" value="UniProtKB-SubCell"/>
</dbReference>
<dbReference type="GO" id="GO:0016149">
    <property type="term" value="F:translation release factor activity, codon specific"/>
    <property type="evidence" value="ECO:0007669"/>
    <property type="project" value="UniProtKB-UniRule"/>
</dbReference>
<dbReference type="FunFam" id="3.30.160.20:FF:000004">
    <property type="entry name" value="Peptide chain release factor 1"/>
    <property type="match status" value="1"/>
</dbReference>
<dbReference type="FunFam" id="3.30.70.1660:FF:000002">
    <property type="entry name" value="Peptide chain release factor 1"/>
    <property type="match status" value="1"/>
</dbReference>
<dbReference type="FunFam" id="3.30.70.1660:FF:000004">
    <property type="entry name" value="Peptide chain release factor 1"/>
    <property type="match status" value="1"/>
</dbReference>
<dbReference type="Gene3D" id="3.30.160.20">
    <property type="match status" value="1"/>
</dbReference>
<dbReference type="Gene3D" id="3.30.70.1660">
    <property type="match status" value="1"/>
</dbReference>
<dbReference type="Gene3D" id="6.10.140.1950">
    <property type="match status" value="1"/>
</dbReference>
<dbReference type="HAMAP" id="MF_00093">
    <property type="entry name" value="Rel_fac_1"/>
    <property type="match status" value="1"/>
</dbReference>
<dbReference type="InterPro" id="IPR005139">
    <property type="entry name" value="PCRF"/>
</dbReference>
<dbReference type="InterPro" id="IPR000352">
    <property type="entry name" value="Pep_chain_release_fac_I"/>
</dbReference>
<dbReference type="InterPro" id="IPR045853">
    <property type="entry name" value="Pep_chain_release_fac_I_sf"/>
</dbReference>
<dbReference type="InterPro" id="IPR050057">
    <property type="entry name" value="Prokaryotic/Mito_RF"/>
</dbReference>
<dbReference type="InterPro" id="IPR004373">
    <property type="entry name" value="RF-1"/>
</dbReference>
<dbReference type="NCBIfam" id="TIGR00019">
    <property type="entry name" value="prfA"/>
    <property type="match status" value="1"/>
</dbReference>
<dbReference type="NCBIfam" id="NF001859">
    <property type="entry name" value="PRK00591.1"/>
    <property type="match status" value="1"/>
</dbReference>
<dbReference type="PANTHER" id="PTHR43804">
    <property type="entry name" value="LD18447P"/>
    <property type="match status" value="1"/>
</dbReference>
<dbReference type="PANTHER" id="PTHR43804:SF7">
    <property type="entry name" value="LD18447P"/>
    <property type="match status" value="1"/>
</dbReference>
<dbReference type="Pfam" id="PF03462">
    <property type="entry name" value="PCRF"/>
    <property type="match status" value="1"/>
</dbReference>
<dbReference type="Pfam" id="PF00472">
    <property type="entry name" value="RF-1"/>
    <property type="match status" value="1"/>
</dbReference>
<dbReference type="SMART" id="SM00937">
    <property type="entry name" value="PCRF"/>
    <property type="match status" value="1"/>
</dbReference>
<dbReference type="SUPFAM" id="SSF75620">
    <property type="entry name" value="Release factor"/>
    <property type="match status" value="1"/>
</dbReference>
<dbReference type="PROSITE" id="PS00745">
    <property type="entry name" value="RF_PROK_I"/>
    <property type="match status" value="1"/>
</dbReference>
<gene>
    <name evidence="1" type="primary">prfA</name>
    <name type="ordered locus">Ecaj_0442</name>
</gene>
<sequence>MSFDSNLEELYQKFCKLKSILEDPSQLSVDSFVAASKEYSELLPVISVIDQYNSLQKDIADLEELINNPETDHELKSLAKEEFYERQKQLPKIKNKLKLSLIPKDRDDARNAILEIRAGTGGEEAALFVTDLYRMYTKYAEQKNWKFEQINSSSTGIGGHKEVSLCISGSNVFARLKFESGVHRVQRVPETEASGRLHTSAATVAVLPEIEEVDLKIDEKDLRIDVYRSSGPGGQSVNTTDSAVRITHIPSGIVVIQQDEKSQHKNKNKALKVLRARLYNLEKQKRDSEISQMRKSQIGSGDRSERIRTYNFPQSRITDHRINLTLYRLEDIMKEGNLDEFIDALIAEDEANKLKNLHI</sequence>
<comment type="function">
    <text evidence="1">Peptide chain release factor 1 directs the termination of translation in response to the peptide chain termination codons UAG and UAA.</text>
</comment>
<comment type="subcellular location">
    <subcellularLocation>
        <location evidence="1">Cytoplasm</location>
    </subcellularLocation>
</comment>
<comment type="PTM">
    <text evidence="1">Methylated by PrmC. Methylation increases the termination efficiency of RF1.</text>
</comment>
<comment type="similarity">
    <text evidence="1">Belongs to the prokaryotic/mitochondrial release factor family.</text>
</comment>
<reference key="1">
    <citation type="journal article" date="2006" name="J. Bacteriol.">
        <title>The genome of the obligately intracellular bacterium Ehrlichia canis reveals themes of complex membrane structure and immune evasion strategies.</title>
        <authorList>
            <person name="Mavromatis K."/>
            <person name="Doyle C.K."/>
            <person name="Lykidis A."/>
            <person name="Ivanova N."/>
            <person name="Francino M.P."/>
            <person name="Chain P."/>
            <person name="Shin M."/>
            <person name="Malfatti S."/>
            <person name="Larimer F."/>
            <person name="Copeland A."/>
            <person name="Detter J.C."/>
            <person name="Land M."/>
            <person name="Richardson P.M."/>
            <person name="Yu X.J."/>
            <person name="Walker D.H."/>
            <person name="McBride J.W."/>
            <person name="Kyrpides N.C."/>
        </authorList>
    </citation>
    <scope>NUCLEOTIDE SEQUENCE [LARGE SCALE GENOMIC DNA]</scope>
    <source>
        <strain>Jake</strain>
    </source>
</reference>
<keyword id="KW-0963">Cytoplasm</keyword>
<keyword id="KW-0488">Methylation</keyword>
<keyword id="KW-0648">Protein biosynthesis</keyword>
<protein>
    <recommendedName>
        <fullName evidence="1">Peptide chain release factor 1</fullName>
        <shortName evidence="1">RF-1</shortName>
    </recommendedName>
</protein>
<feature type="chain" id="PRO_0000263269" description="Peptide chain release factor 1">
    <location>
        <begin position="1"/>
        <end position="359"/>
    </location>
</feature>
<feature type="region of interest" description="Disordered" evidence="2">
    <location>
        <begin position="285"/>
        <end position="305"/>
    </location>
</feature>
<feature type="compositionally biased region" description="Polar residues" evidence="2">
    <location>
        <begin position="290"/>
        <end position="299"/>
    </location>
</feature>
<feature type="modified residue" description="N5-methylglutamine" evidence="1">
    <location>
        <position position="235"/>
    </location>
</feature>
<proteinExistence type="inferred from homology"/>
<evidence type="ECO:0000255" key="1">
    <source>
        <dbReference type="HAMAP-Rule" id="MF_00093"/>
    </source>
</evidence>
<evidence type="ECO:0000256" key="2">
    <source>
        <dbReference type="SAM" id="MobiDB-lite"/>
    </source>
</evidence>
<organism>
    <name type="scientific">Ehrlichia canis (strain Jake)</name>
    <dbReference type="NCBI Taxonomy" id="269484"/>
    <lineage>
        <taxon>Bacteria</taxon>
        <taxon>Pseudomonadati</taxon>
        <taxon>Pseudomonadota</taxon>
        <taxon>Alphaproteobacteria</taxon>
        <taxon>Rickettsiales</taxon>
        <taxon>Anaplasmataceae</taxon>
        <taxon>Ehrlichia</taxon>
    </lineage>
</organism>
<accession>Q3YS23</accession>